<feature type="chain" id="PRO_0000148233" description="Phosphoribosylformylglycinamidine cyclo-ligase">
    <location>
        <begin position="1"/>
        <end position="353"/>
    </location>
</feature>
<keyword id="KW-0067">ATP-binding</keyword>
<keyword id="KW-0963">Cytoplasm</keyword>
<keyword id="KW-0436">Ligase</keyword>
<keyword id="KW-0547">Nucleotide-binding</keyword>
<keyword id="KW-0658">Purine biosynthesis</keyword>
<keyword id="KW-1185">Reference proteome</keyword>
<protein>
    <recommendedName>
        <fullName evidence="1">Phosphoribosylformylglycinamidine cyclo-ligase</fullName>
        <ecNumber evidence="1">6.3.3.1</ecNumber>
    </recommendedName>
    <alternativeName>
        <fullName evidence="1">AIR synthase</fullName>
    </alternativeName>
    <alternativeName>
        <fullName evidence="1">AIRS</fullName>
    </alternativeName>
    <alternativeName>
        <fullName evidence="1">Phosphoribosyl-aminoimidazole synthetase</fullName>
    </alternativeName>
</protein>
<accession>Q9I513</accession>
<name>PUR5_PSEAE</name>
<organism>
    <name type="scientific">Pseudomonas aeruginosa (strain ATCC 15692 / DSM 22644 / CIP 104116 / JCM 14847 / LMG 12228 / 1C / PRS 101 / PAO1)</name>
    <dbReference type="NCBI Taxonomy" id="208964"/>
    <lineage>
        <taxon>Bacteria</taxon>
        <taxon>Pseudomonadati</taxon>
        <taxon>Pseudomonadota</taxon>
        <taxon>Gammaproteobacteria</taxon>
        <taxon>Pseudomonadales</taxon>
        <taxon>Pseudomonadaceae</taxon>
        <taxon>Pseudomonas</taxon>
    </lineage>
</organism>
<evidence type="ECO:0000255" key="1">
    <source>
        <dbReference type="HAMAP-Rule" id="MF_00741"/>
    </source>
</evidence>
<proteinExistence type="inferred from homology"/>
<dbReference type="EC" id="6.3.3.1" evidence="1"/>
<dbReference type="EMBL" id="AE004091">
    <property type="protein sequence ID" value="AAG04334.1"/>
    <property type="molecule type" value="Genomic_DNA"/>
</dbReference>
<dbReference type="PIR" id="A83529">
    <property type="entry name" value="A83529"/>
</dbReference>
<dbReference type="RefSeq" id="NP_249636.1">
    <property type="nucleotide sequence ID" value="NC_002516.2"/>
</dbReference>
<dbReference type="RefSeq" id="WP_003112583.1">
    <property type="nucleotide sequence ID" value="NZ_QZGE01000007.1"/>
</dbReference>
<dbReference type="SMR" id="Q9I513"/>
<dbReference type="FunCoup" id="Q9I513">
    <property type="interactions" value="650"/>
</dbReference>
<dbReference type="STRING" id="208964.PA0945"/>
<dbReference type="PaxDb" id="208964-PA0945"/>
<dbReference type="DNASU" id="879549"/>
<dbReference type="GeneID" id="879549"/>
<dbReference type="KEGG" id="pae:PA0945"/>
<dbReference type="PATRIC" id="fig|208964.12.peg.981"/>
<dbReference type="PseudoCAP" id="PA0945"/>
<dbReference type="HOGENOM" id="CLU_047116_0_0_6"/>
<dbReference type="InParanoid" id="Q9I513"/>
<dbReference type="OrthoDB" id="9777881at2"/>
<dbReference type="PhylomeDB" id="Q9I513"/>
<dbReference type="BioCyc" id="PAER208964:G1FZ6-965-MONOMER"/>
<dbReference type="UniPathway" id="UPA00074">
    <property type="reaction ID" value="UER00129"/>
</dbReference>
<dbReference type="Proteomes" id="UP000002438">
    <property type="component" value="Chromosome"/>
</dbReference>
<dbReference type="GO" id="GO:0005829">
    <property type="term" value="C:cytosol"/>
    <property type="evidence" value="ECO:0000318"/>
    <property type="project" value="GO_Central"/>
</dbReference>
<dbReference type="GO" id="GO:0005524">
    <property type="term" value="F:ATP binding"/>
    <property type="evidence" value="ECO:0007669"/>
    <property type="project" value="UniProtKB-KW"/>
</dbReference>
<dbReference type="GO" id="GO:0004637">
    <property type="term" value="F:phosphoribosylamine-glycine ligase activity"/>
    <property type="evidence" value="ECO:0000318"/>
    <property type="project" value="GO_Central"/>
</dbReference>
<dbReference type="GO" id="GO:0004641">
    <property type="term" value="F:phosphoribosylformylglycinamidine cyclo-ligase activity"/>
    <property type="evidence" value="ECO:0000318"/>
    <property type="project" value="GO_Central"/>
</dbReference>
<dbReference type="GO" id="GO:0006189">
    <property type="term" value="P:'de novo' IMP biosynthetic process"/>
    <property type="evidence" value="ECO:0007669"/>
    <property type="project" value="UniProtKB-UniRule"/>
</dbReference>
<dbReference type="GO" id="GO:0046084">
    <property type="term" value="P:adenine biosynthetic process"/>
    <property type="evidence" value="ECO:0000318"/>
    <property type="project" value="GO_Central"/>
</dbReference>
<dbReference type="GO" id="GO:0006164">
    <property type="term" value="P:purine nucleotide biosynthetic process"/>
    <property type="evidence" value="ECO:0000318"/>
    <property type="project" value="GO_Central"/>
</dbReference>
<dbReference type="CDD" id="cd02196">
    <property type="entry name" value="PurM"/>
    <property type="match status" value="1"/>
</dbReference>
<dbReference type="FunFam" id="3.30.1330.10:FF:000001">
    <property type="entry name" value="Phosphoribosylformylglycinamidine cyclo-ligase"/>
    <property type="match status" value="1"/>
</dbReference>
<dbReference type="FunFam" id="3.90.650.10:FF:000001">
    <property type="entry name" value="Phosphoribosylformylglycinamidine cyclo-ligase"/>
    <property type="match status" value="1"/>
</dbReference>
<dbReference type="Gene3D" id="3.90.650.10">
    <property type="entry name" value="PurM-like C-terminal domain"/>
    <property type="match status" value="1"/>
</dbReference>
<dbReference type="Gene3D" id="3.30.1330.10">
    <property type="entry name" value="PurM-like, N-terminal domain"/>
    <property type="match status" value="1"/>
</dbReference>
<dbReference type="HAMAP" id="MF_00741">
    <property type="entry name" value="AIRS"/>
    <property type="match status" value="1"/>
</dbReference>
<dbReference type="InterPro" id="IPR010918">
    <property type="entry name" value="PurM-like_C_dom"/>
</dbReference>
<dbReference type="InterPro" id="IPR036676">
    <property type="entry name" value="PurM-like_C_sf"/>
</dbReference>
<dbReference type="InterPro" id="IPR016188">
    <property type="entry name" value="PurM-like_N"/>
</dbReference>
<dbReference type="InterPro" id="IPR036921">
    <property type="entry name" value="PurM-like_N_sf"/>
</dbReference>
<dbReference type="InterPro" id="IPR004733">
    <property type="entry name" value="PurM_cligase"/>
</dbReference>
<dbReference type="NCBIfam" id="TIGR00878">
    <property type="entry name" value="purM"/>
    <property type="match status" value="1"/>
</dbReference>
<dbReference type="PANTHER" id="PTHR10520:SF12">
    <property type="entry name" value="TRIFUNCTIONAL PURINE BIOSYNTHETIC PROTEIN ADENOSINE-3"/>
    <property type="match status" value="1"/>
</dbReference>
<dbReference type="PANTHER" id="PTHR10520">
    <property type="entry name" value="TRIFUNCTIONAL PURINE BIOSYNTHETIC PROTEIN ADENOSINE-3-RELATED"/>
    <property type="match status" value="1"/>
</dbReference>
<dbReference type="Pfam" id="PF00586">
    <property type="entry name" value="AIRS"/>
    <property type="match status" value="1"/>
</dbReference>
<dbReference type="Pfam" id="PF02769">
    <property type="entry name" value="AIRS_C"/>
    <property type="match status" value="1"/>
</dbReference>
<dbReference type="SUPFAM" id="SSF56042">
    <property type="entry name" value="PurM C-terminal domain-like"/>
    <property type="match status" value="1"/>
</dbReference>
<dbReference type="SUPFAM" id="SSF55326">
    <property type="entry name" value="PurM N-terminal domain-like"/>
    <property type="match status" value="1"/>
</dbReference>
<sequence length="353" mass="37123">MSSKQPSLSYKDAGVDIDAGEALVERIKGVAKRTARPEVMGGLGGFGALCEIPAGYKQPVLVSGTDGVGTKLRLALNLNKHDSIGQDLVAMCVNDLVVCGAEPLFFLDYYATGKLNVDVAATVVTGIGAGCELAGCSLVGGETAEMPGMYEGEDYDLAGFCVGVVEKAEIIDGSRVQAGDALIALPSSGPHSNGYSLIRKIIEVSGADIAQVQLDGKPLADLLMAPTRIYVKPLLQLIKQTGAVKAMAHITGGGLLDNIPRVLPDNAQAVIDVASWNRPAVFDWLQEQGNVDETEMHRVLNCGVGMVICVAQSDAEKALEVLRAAGEQPWQIGRIETCGADAERVVLNNLKNH</sequence>
<gene>
    <name evidence="1" type="primary">purM</name>
    <name type="ordered locus">PA0945</name>
</gene>
<comment type="catalytic activity">
    <reaction evidence="1">
        <text>2-formamido-N(1)-(5-O-phospho-beta-D-ribosyl)acetamidine + ATP = 5-amino-1-(5-phospho-beta-D-ribosyl)imidazole + ADP + phosphate + H(+)</text>
        <dbReference type="Rhea" id="RHEA:23032"/>
        <dbReference type="ChEBI" id="CHEBI:15378"/>
        <dbReference type="ChEBI" id="CHEBI:30616"/>
        <dbReference type="ChEBI" id="CHEBI:43474"/>
        <dbReference type="ChEBI" id="CHEBI:137981"/>
        <dbReference type="ChEBI" id="CHEBI:147287"/>
        <dbReference type="ChEBI" id="CHEBI:456216"/>
        <dbReference type="EC" id="6.3.3.1"/>
    </reaction>
</comment>
<comment type="pathway">
    <text evidence="1">Purine metabolism; IMP biosynthesis via de novo pathway; 5-amino-1-(5-phospho-D-ribosyl)imidazole from N(2)-formyl-N(1)-(5-phospho-D-ribosyl)glycinamide: step 2/2.</text>
</comment>
<comment type="subcellular location">
    <subcellularLocation>
        <location evidence="1">Cytoplasm</location>
    </subcellularLocation>
</comment>
<comment type="similarity">
    <text evidence="1">Belongs to the AIR synthase family.</text>
</comment>
<reference key="1">
    <citation type="journal article" date="2000" name="Nature">
        <title>Complete genome sequence of Pseudomonas aeruginosa PAO1, an opportunistic pathogen.</title>
        <authorList>
            <person name="Stover C.K."/>
            <person name="Pham X.-Q.T."/>
            <person name="Erwin A.L."/>
            <person name="Mizoguchi S.D."/>
            <person name="Warrener P."/>
            <person name="Hickey M.J."/>
            <person name="Brinkman F.S.L."/>
            <person name="Hufnagle W.O."/>
            <person name="Kowalik D.J."/>
            <person name="Lagrou M."/>
            <person name="Garber R.L."/>
            <person name="Goltry L."/>
            <person name="Tolentino E."/>
            <person name="Westbrock-Wadman S."/>
            <person name="Yuan Y."/>
            <person name="Brody L.L."/>
            <person name="Coulter S.N."/>
            <person name="Folger K.R."/>
            <person name="Kas A."/>
            <person name="Larbig K."/>
            <person name="Lim R.M."/>
            <person name="Smith K.A."/>
            <person name="Spencer D.H."/>
            <person name="Wong G.K.-S."/>
            <person name="Wu Z."/>
            <person name="Paulsen I.T."/>
            <person name="Reizer J."/>
            <person name="Saier M.H. Jr."/>
            <person name="Hancock R.E.W."/>
            <person name="Lory S."/>
            <person name="Olson M.V."/>
        </authorList>
    </citation>
    <scope>NUCLEOTIDE SEQUENCE [LARGE SCALE GENOMIC DNA]</scope>
    <source>
        <strain>ATCC 15692 / DSM 22644 / CIP 104116 / JCM 14847 / LMG 12228 / 1C / PRS 101 / PAO1</strain>
    </source>
</reference>